<dbReference type="EMBL" id="AE017224">
    <property type="protein sequence ID" value="AAX76314.1"/>
    <property type="molecule type" value="Genomic_DNA"/>
</dbReference>
<dbReference type="RefSeq" id="WP_002966335.1">
    <property type="nucleotide sequence ID" value="NC_006933.1"/>
</dbReference>
<dbReference type="EnsemblBacteria" id="AAX76314">
    <property type="protein sequence ID" value="AAX76314"/>
    <property type="gene ID" value="BruAb2_0928"/>
</dbReference>
<dbReference type="KEGG" id="bmb:BruAb2_0928"/>
<dbReference type="HOGENOM" id="CLU_024042_0_0_5"/>
<dbReference type="PRO" id="PR:Q576X0"/>
<dbReference type="Proteomes" id="UP000000540">
    <property type="component" value="Chromosome II"/>
</dbReference>
<dbReference type="CDD" id="cd01454">
    <property type="entry name" value="vWA_norD_type"/>
    <property type="match status" value="1"/>
</dbReference>
<dbReference type="Gene3D" id="3.40.50.410">
    <property type="entry name" value="von Willebrand factor, type A domain"/>
    <property type="match status" value="1"/>
</dbReference>
<dbReference type="InterPro" id="IPR051928">
    <property type="entry name" value="NorD/CobT"/>
</dbReference>
<dbReference type="InterPro" id="IPR002035">
    <property type="entry name" value="VWF_A"/>
</dbReference>
<dbReference type="InterPro" id="IPR036465">
    <property type="entry name" value="vWFA_dom_sf"/>
</dbReference>
<dbReference type="PANTHER" id="PTHR41248">
    <property type="entry name" value="NORD PROTEIN"/>
    <property type="match status" value="1"/>
</dbReference>
<dbReference type="PANTHER" id="PTHR41248:SF1">
    <property type="entry name" value="NORD PROTEIN"/>
    <property type="match status" value="1"/>
</dbReference>
<dbReference type="Pfam" id="PF00092">
    <property type="entry name" value="VWA"/>
    <property type="match status" value="1"/>
</dbReference>
<dbReference type="SMART" id="SM00327">
    <property type="entry name" value="VWA"/>
    <property type="match status" value="1"/>
</dbReference>
<dbReference type="SUPFAM" id="SSF53300">
    <property type="entry name" value="vWA-like"/>
    <property type="match status" value="1"/>
</dbReference>
<dbReference type="PROSITE" id="PS50234">
    <property type="entry name" value="VWFA"/>
    <property type="match status" value="1"/>
</dbReference>
<feature type="chain" id="PRO_0000248304" description="Protein NorD">
    <location>
        <begin position="1"/>
        <end position="633"/>
    </location>
</feature>
<feature type="domain" description="VWFA" evidence="2">
    <location>
        <begin position="445"/>
        <end position="633"/>
    </location>
</feature>
<feature type="region of interest" description="Disordered" evidence="3">
    <location>
        <begin position="232"/>
        <end position="270"/>
    </location>
</feature>
<feature type="region of interest" description="Disordered" evidence="3">
    <location>
        <begin position="290"/>
        <end position="314"/>
    </location>
</feature>
<feature type="compositionally biased region" description="Basic and acidic residues" evidence="3">
    <location>
        <begin position="232"/>
        <end position="243"/>
    </location>
</feature>
<feature type="compositionally biased region" description="Basic and acidic residues" evidence="3">
    <location>
        <begin position="258"/>
        <end position="270"/>
    </location>
</feature>
<feature type="compositionally biased region" description="Basic and acidic residues" evidence="3">
    <location>
        <begin position="292"/>
        <end position="306"/>
    </location>
</feature>
<evidence type="ECO:0000250" key="1"/>
<evidence type="ECO:0000255" key="2">
    <source>
        <dbReference type="PROSITE-ProRule" id="PRU00219"/>
    </source>
</evidence>
<evidence type="ECO:0000256" key="3">
    <source>
        <dbReference type="SAM" id="MobiDB-lite"/>
    </source>
</evidence>
<protein>
    <recommendedName>
        <fullName>Protein NorD</fullName>
    </recommendedName>
</protein>
<keyword id="KW-0843">Virulence</keyword>
<sequence>MLDFLELEETVGRAWHRLIGKTGSWPQYPDHAVQLVDIRQRLAICFRGFGGDIAVQIAPARARTSTHRLGLRQRMALGEEKLAQPLRDEATLMLPPEIALFPDRQLNYDLYVWLVGYMAVMPMDADALPEDALRRDLAALQIAEQTVERACRAFPGLKPRYKRLCAAILAERPKRPLHRLEQQVEARILSLLKQGADLPDDALPTIFPHRGPAGYLPALPVPLWPGLMKREEVAPRTGEDEPVRNSQSEGAETGRQIAQRERQDPRHADRSPFILNRFEKILAMAEMVSVDRPSDDSDEQNAKSADELDDLTLGERKGRPAARFRFDLDLPPEAVDRSLLTAELTYPEWDYRKGAYLPDHCAVLAAPVQEKEKPLELDAAAQSLVRRVRRQFEILRPGREVLRAQLDGTDLDLDAVVRSRCDLAAGGQGSDRVHLMSRPQANDLAVTLLVDVSLSTDAWVDNRRVLDVEKEALLVLANGIAACGDRCSILTFTSRRRSWVRVETVKDFDESFGPTVEHRIAALKPGFYTRMGAAMRHATAKLAEQPNRKKLLLLLTDGKPNDVDHYEGRFALEDSRRAAGEVRAKGVNVFAVTVDREASAYLPALFGRGGYALVANLAKLPVAMPAIYRMLAG</sequence>
<name>NORD_BRUAB</name>
<accession>Q576X0</accession>
<proteinExistence type="inferred from homology"/>
<reference key="1">
    <citation type="journal article" date="2005" name="J. Bacteriol.">
        <title>Completion of the genome sequence of Brucella abortus and comparison to the highly similar genomes of Brucella melitensis and Brucella suis.</title>
        <authorList>
            <person name="Halling S.M."/>
            <person name="Peterson-Burch B.D."/>
            <person name="Bricker B.J."/>
            <person name="Zuerner R.L."/>
            <person name="Qing Z."/>
            <person name="Li L.-L."/>
            <person name="Kapur V."/>
            <person name="Alt D.P."/>
            <person name="Olsen S.C."/>
        </authorList>
    </citation>
    <scope>NUCLEOTIDE SEQUENCE [LARGE SCALE GENOMIC DNA]</scope>
    <source>
        <strain>9-941</strain>
    </source>
</reference>
<comment type="function">
    <text evidence="1">Part of the operon norEFCBQD encoding nitric oxide reductase. Essential virulence factor, probably involved in the detoxification of nitric oxide (NO) produced in the macrophages during the innate response against infection (By similarity).</text>
</comment>
<gene>
    <name type="primary">norD</name>
    <name type="ordered locus">BruAb2_0928</name>
</gene>
<organism>
    <name type="scientific">Brucella abortus biovar 1 (strain 9-941)</name>
    <dbReference type="NCBI Taxonomy" id="262698"/>
    <lineage>
        <taxon>Bacteria</taxon>
        <taxon>Pseudomonadati</taxon>
        <taxon>Pseudomonadota</taxon>
        <taxon>Alphaproteobacteria</taxon>
        <taxon>Hyphomicrobiales</taxon>
        <taxon>Brucellaceae</taxon>
        <taxon>Brucella/Ochrobactrum group</taxon>
        <taxon>Brucella</taxon>
    </lineage>
</organism>